<evidence type="ECO:0000255" key="1"/>
<evidence type="ECO:0000305" key="2"/>
<accession>O51055</accession>
<protein>
    <recommendedName>
        <fullName>Uncharacterized protein BB_0024</fullName>
    </recommendedName>
</protein>
<keyword id="KW-0472">Membrane</keyword>
<keyword id="KW-1185">Reference proteome</keyword>
<keyword id="KW-0812">Transmembrane</keyword>
<keyword id="KW-1133">Transmembrane helix</keyword>
<proteinExistence type="predicted"/>
<reference key="1">
    <citation type="journal article" date="1997" name="Nature">
        <title>Genomic sequence of a Lyme disease spirochaete, Borrelia burgdorferi.</title>
        <authorList>
            <person name="Fraser C.M."/>
            <person name="Casjens S."/>
            <person name="Huang W.M."/>
            <person name="Sutton G.G."/>
            <person name="Clayton R.A."/>
            <person name="Lathigra R."/>
            <person name="White O."/>
            <person name="Ketchum K.A."/>
            <person name="Dodson R.J."/>
            <person name="Hickey E.K."/>
            <person name="Gwinn M.L."/>
            <person name="Dougherty B.A."/>
            <person name="Tomb J.-F."/>
            <person name="Fleischmann R.D."/>
            <person name="Richardson D.L."/>
            <person name="Peterson J.D."/>
            <person name="Kerlavage A.R."/>
            <person name="Quackenbush J."/>
            <person name="Salzberg S.L."/>
            <person name="Hanson M."/>
            <person name="van Vugt R."/>
            <person name="Palmer N."/>
            <person name="Adams M.D."/>
            <person name="Gocayne J.D."/>
            <person name="Weidman J.F."/>
            <person name="Utterback T.R."/>
            <person name="Watthey L."/>
            <person name="McDonald L.A."/>
            <person name="Artiach P."/>
            <person name="Bowman C."/>
            <person name="Garland S.A."/>
            <person name="Fujii C."/>
            <person name="Cotton M.D."/>
            <person name="Horst K."/>
            <person name="Roberts K.M."/>
            <person name="Hatch B."/>
            <person name="Smith H.O."/>
            <person name="Venter J.C."/>
        </authorList>
    </citation>
    <scope>NUCLEOTIDE SEQUENCE [LARGE SCALE GENOMIC DNA]</scope>
    <source>
        <strain>ATCC 35210 / DSM 4680 / CIP 102532 / B31</strain>
    </source>
</reference>
<gene>
    <name type="ordered locus">BB_0024</name>
</gene>
<organism>
    <name type="scientific">Borreliella burgdorferi (strain ATCC 35210 / DSM 4680 / CIP 102532 / B31)</name>
    <name type="common">Borrelia burgdorferi</name>
    <dbReference type="NCBI Taxonomy" id="224326"/>
    <lineage>
        <taxon>Bacteria</taxon>
        <taxon>Pseudomonadati</taxon>
        <taxon>Spirochaetota</taxon>
        <taxon>Spirochaetia</taxon>
        <taxon>Spirochaetales</taxon>
        <taxon>Borreliaceae</taxon>
        <taxon>Borreliella</taxon>
    </lineage>
</organism>
<dbReference type="EMBL" id="AE000783">
    <property type="protein sequence ID" value="AAC66415.1"/>
    <property type="molecule type" value="Genomic_DNA"/>
</dbReference>
<dbReference type="PIR" id="H70102">
    <property type="entry name" value="H70102"/>
</dbReference>
<dbReference type="RefSeq" id="NP_212158.1">
    <property type="nucleotide sequence ID" value="NC_001318.1"/>
</dbReference>
<dbReference type="RefSeq" id="WP_010889662.1">
    <property type="nucleotide sequence ID" value="NC_001318.1"/>
</dbReference>
<dbReference type="SMR" id="O51055"/>
<dbReference type="STRING" id="224326.BB_0024"/>
<dbReference type="PaxDb" id="224326-BB_0024"/>
<dbReference type="EnsemblBacteria" id="AAC66415">
    <property type="protein sequence ID" value="AAC66415"/>
    <property type="gene ID" value="BB_0024"/>
</dbReference>
<dbReference type="KEGG" id="bbu:BB_0024"/>
<dbReference type="PATRIC" id="fig|224326.49.peg.423"/>
<dbReference type="HOGENOM" id="CLU_024435_3_1_12"/>
<dbReference type="OrthoDB" id="9770043at2"/>
<dbReference type="Proteomes" id="UP000001807">
    <property type="component" value="Chromosome"/>
</dbReference>
<dbReference type="GO" id="GO:0016020">
    <property type="term" value="C:membrane"/>
    <property type="evidence" value="ECO:0007669"/>
    <property type="project" value="UniProtKB-SubCell"/>
</dbReference>
<dbReference type="Gene3D" id="2.120.10.30">
    <property type="entry name" value="TolB, C-terminal domain"/>
    <property type="match status" value="1"/>
</dbReference>
<dbReference type="InterPro" id="IPR011042">
    <property type="entry name" value="6-blade_b-propeller_TolB-like"/>
</dbReference>
<dbReference type="InterPro" id="IPR012938">
    <property type="entry name" value="Glc/Sorbosone_DH"/>
</dbReference>
<dbReference type="InterPro" id="IPR011041">
    <property type="entry name" value="Quinoprot_gluc/sorb_DH_b-prop"/>
</dbReference>
<dbReference type="PANTHER" id="PTHR19328:SF40">
    <property type="entry name" value="BLL0591 PROTEIN"/>
    <property type="match status" value="1"/>
</dbReference>
<dbReference type="PANTHER" id="PTHR19328">
    <property type="entry name" value="HEDGEHOG-INTERACTING PROTEIN"/>
    <property type="match status" value="1"/>
</dbReference>
<dbReference type="Pfam" id="PF07995">
    <property type="entry name" value="GSDH"/>
    <property type="match status" value="1"/>
</dbReference>
<dbReference type="SUPFAM" id="SSF50952">
    <property type="entry name" value="Soluble quinoprotein glucose dehydrogenase"/>
    <property type="match status" value="1"/>
</dbReference>
<feature type="chain" id="PRO_0000174368" description="Uncharacterized protein BB_0024">
    <location>
        <begin position="1"/>
        <end position="379"/>
    </location>
</feature>
<feature type="transmembrane region" description="Helical" evidence="1">
    <location>
        <begin position="9"/>
        <end position="26"/>
    </location>
</feature>
<name>Y024_BORBU</name>
<sequence length="379" mass="43665">MKNQFLNSYFQLITTIFLISSITIAAEEITSTLKVPNGFKVEIFLNNTIEKPRGITSDQDGNIFIGSGSTFAYFVTKNRKIYTIAKTLQKPIGIDYWDNKLYISSVDKIYVVKNVKEEINKSIKSHKDYTWKMQIFALLPKNNSQMHSGRYIKVDSKNNKLIVNIGSQHNVKIPPKKEAVILSINLKTKKEEIVAFGVRNSVGFDFHPISNEIYFSDNGQDGLGDNIPPDEINVITEYKEHFGFPYVFGKNQKNYGFYNKAPKNTKFIPSIYELPAHVAPLGIHFYRGNNFPKEYINKLFIAEHGSWNRSSPVGYKITTLDIDSKTRTARNYKTFLYGFLKHDKSKFGRPVDIITYYDGSILFTDDFGNKIYRVYYEKI</sequence>
<comment type="subcellular location">
    <subcellularLocation>
        <location evidence="2">Membrane</location>
        <topology evidence="2">Single-pass membrane protein</topology>
    </subcellularLocation>
</comment>
<comment type="similarity">
    <text evidence="2">To A.liquefaciens L-sorbosone dehydrogenase.</text>
</comment>